<keyword id="KW-0687">Ribonucleoprotein</keyword>
<keyword id="KW-0689">Ribosomal protein</keyword>
<keyword id="KW-0694">RNA-binding</keyword>
<keyword id="KW-0699">rRNA-binding</keyword>
<dbReference type="EMBL" id="CP000943">
    <property type="protein sequence ID" value="ACA14908.1"/>
    <property type="molecule type" value="Genomic_DNA"/>
</dbReference>
<dbReference type="RefSeq" id="WP_012330326.1">
    <property type="nucleotide sequence ID" value="NC_010511.1"/>
</dbReference>
<dbReference type="SMR" id="B0UHV3"/>
<dbReference type="STRING" id="426117.M446_0337"/>
<dbReference type="KEGG" id="met:M446_0337"/>
<dbReference type="eggNOG" id="COG0256">
    <property type="taxonomic scope" value="Bacteria"/>
</dbReference>
<dbReference type="HOGENOM" id="CLU_098841_0_1_5"/>
<dbReference type="GO" id="GO:0022625">
    <property type="term" value="C:cytosolic large ribosomal subunit"/>
    <property type="evidence" value="ECO:0007669"/>
    <property type="project" value="TreeGrafter"/>
</dbReference>
<dbReference type="GO" id="GO:0008097">
    <property type="term" value="F:5S rRNA binding"/>
    <property type="evidence" value="ECO:0007669"/>
    <property type="project" value="TreeGrafter"/>
</dbReference>
<dbReference type="GO" id="GO:0003735">
    <property type="term" value="F:structural constituent of ribosome"/>
    <property type="evidence" value="ECO:0007669"/>
    <property type="project" value="InterPro"/>
</dbReference>
<dbReference type="GO" id="GO:0006412">
    <property type="term" value="P:translation"/>
    <property type="evidence" value="ECO:0007669"/>
    <property type="project" value="UniProtKB-UniRule"/>
</dbReference>
<dbReference type="CDD" id="cd00432">
    <property type="entry name" value="Ribosomal_L18_L5e"/>
    <property type="match status" value="1"/>
</dbReference>
<dbReference type="FunFam" id="3.30.420.100:FF:000001">
    <property type="entry name" value="50S ribosomal protein L18"/>
    <property type="match status" value="1"/>
</dbReference>
<dbReference type="Gene3D" id="3.30.420.100">
    <property type="match status" value="1"/>
</dbReference>
<dbReference type="HAMAP" id="MF_01337_B">
    <property type="entry name" value="Ribosomal_uL18_B"/>
    <property type="match status" value="1"/>
</dbReference>
<dbReference type="InterPro" id="IPR004389">
    <property type="entry name" value="Ribosomal_uL18_bac-type"/>
</dbReference>
<dbReference type="InterPro" id="IPR005484">
    <property type="entry name" value="Ribosomal_uL18_bac/euk"/>
</dbReference>
<dbReference type="NCBIfam" id="TIGR00060">
    <property type="entry name" value="L18_bact"/>
    <property type="match status" value="1"/>
</dbReference>
<dbReference type="PANTHER" id="PTHR12899">
    <property type="entry name" value="39S RIBOSOMAL PROTEIN L18, MITOCHONDRIAL"/>
    <property type="match status" value="1"/>
</dbReference>
<dbReference type="PANTHER" id="PTHR12899:SF3">
    <property type="entry name" value="LARGE RIBOSOMAL SUBUNIT PROTEIN UL18M"/>
    <property type="match status" value="1"/>
</dbReference>
<dbReference type="Pfam" id="PF00861">
    <property type="entry name" value="Ribosomal_L18p"/>
    <property type="match status" value="1"/>
</dbReference>
<dbReference type="SUPFAM" id="SSF53137">
    <property type="entry name" value="Translational machinery components"/>
    <property type="match status" value="1"/>
</dbReference>
<organism>
    <name type="scientific">Methylobacterium sp. (strain 4-46)</name>
    <dbReference type="NCBI Taxonomy" id="426117"/>
    <lineage>
        <taxon>Bacteria</taxon>
        <taxon>Pseudomonadati</taxon>
        <taxon>Pseudomonadota</taxon>
        <taxon>Alphaproteobacteria</taxon>
        <taxon>Hyphomicrobiales</taxon>
        <taxon>Methylobacteriaceae</taxon>
        <taxon>Methylobacterium</taxon>
    </lineage>
</organism>
<proteinExistence type="inferred from homology"/>
<protein>
    <recommendedName>
        <fullName evidence="1">Large ribosomal subunit protein uL18</fullName>
    </recommendedName>
    <alternativeName>
        <fullName evidence="2">50S ribosomal protein L18</fullName>
    </alternativeName>
</protein>
<evidence type="ECO:0000255" key="1">
    <source>
        <dbReference type="HAMAP-Rule" id="MF_01337"/>
    </source>
</evidence>
<evidence type="ECO:0000305" key="2"/>
<feature type="chain" id="PRO_1000142691" description="Large ribosomal subunit protein uL18">
    <location>
        <begin position="1"/>
        <end position="120"/>
    </location>
</feature>
<sequence length="120" mass="13095">MSRKIDLLDRRRARVRRALRAAANGRPRLSVFRSSKQIYVQVIDDASGRTLAAASSLDKDLRARLKTGADKAAALEVGKLVAERAKAAGVTKVIFDRSGYLYHGRVKALADAAREGGLEF</sequence>
<comment type="function">
    <text evidence="1">This is one of the proteins that bind and probably mediate the attachment of the 5S RNA into the large ribosomal subunit, where it forms part of the central protuberance.</text>
</comment>
<comment type="subunit">
    <text evidence="1">Part of the 50S ribosomal subunit; part of the 5S rRNA/L5/L18/L25 subcomplex. Contacts the 5S and 23S rRNAs.</text>
</comment>
<comment type="similarity">
    <text evidence="1">Belongs to the universal ribosomal protein uL18 family.</text>
</comment>
<name>RL18_METS4</name>
<gene>
    <name evidence="1" type="primary">rplR</name>
    <name type="ordered locus">M446_0337</name>
</gene>
<accession>B0UHV3</accession>
<reference key="1">
    <citation type="submission" date="2008-02" db="EMBL/GenBank/DDBJ databases">
        <title>Complete sequence of chromosome of Methylobacterium sp. 4-46.</title>
        <authorList>
            <consortium name="US DOE Joint Genome Institute"/>
            <person name="Copeland A."/>
            <person name="Lucas S."/>
            <person name="Lapidus A."/>
            <person name="Glavina del Rio T."/>
            <person name="Dalin E."/>
            <person name="Tice H."/>
            <person name="Bruce D."/>
            <person name="Goodwin L."/>
            <person name="Pitluck S."/>
            <person name="Chertkov O."/>
            <person name="Brettin T."/>
            <person name="Detter J.C."/>
            <person name="Han C."/>
            <person name="Kuske C.R."/>
            <person name="Schmutz J."/>
            <person name="Larimer F."/>
            <person name="Land M."/>
            <person name="Hauser L."/>
            <person name="Kyrpides N."/>
            <person name="Ivanova N."/>
            <person name="Marx C.J."/>
            <person name="Richardson P."/>
        </authorList>
    </citation>
    <scope>NUCLEOTIDE SEQUENCE [LARGE SCALE GENOMIC DNA]</scope>
    <source>
        <strain>4-46</strain>
    </source>
</reference>